<name>KU_SOLUE</name>
<accession>Q021H8</accession>
<comment type="function">
    <text evidence="1">With LigD forms a non-homologous end joining (NHEJ) DNA repair enzyme, which repairs dsDNA breaks with reduced fidelity. Binds linear dsDNA with 5'- and 3'- overhangs but not closed circular dsDNA nor ssDNA. Recruits and stimulates the ligase activity of LigD.</text>
</comment>
<comment type="subunit">
    <text evidence="1">Homodimer. Interacts with LigD.</text>
</comment>
<comment type="similarity">
    <text evidence="1">Belongs to the prokaryotic Ku family.</text>
</comment>
<sequence length="267" mass="30236">MAAIVWKGFISFGLVSFPVRLNAAARPETIHFHMLHKKDESRVKEVWYCADENKPIDRAEIVKGYEVRKGEYVVIEDEDLKKIAPPTATTMDILQFVKSDQVDPIYFESSYYVGAEEGGGKAYALFVAALDATKEDAIAKLSMHNREHIVLIRASDNALVLHTLYYPNELHKANRSETPKTKYTAKELELAQSLVSQLTAPFKPQEFHDEYRENVEHLIEQKRKGGKITAVKQPRKAPVIDLMEALKRSVKAAESKRKKPAGKRKAA</sequence>
<protein>
    <recommendedName>
        <fullName evidence="1">Non-homologous end joining protein Ku</fullName>
    </recommendedName>
</protein>
<evidence type="ECO:0000255" key="1">
    <source>
        <dbReference type="HAMAP-Rule" id="MF_01875"/>
    </source>
</evidence>
<gene>
    <name evidence="1" type="primary">ku</name>
    <name type="ordered locus">Acid_3438</name>
</gene>
<dbReference type="EMBL" id="CP000473">
    <property type="protein sequence ID" value="ABJ84411.1"/>
    <property type="molecule type" value="Genomic_DNA"/>
</dbReference>
<dbReference type="STRING" id="234267.Acid_3438"/>
<dbReference type="KEGG" id="sus:Acid_3438"/>
<dbReference type="eggNOG" id="COG1273">
    <property type="taxonomic scope" value="Bacteria"/>
</dbReference>
<dbReference type="HOGENOM" id="CLU_048975_1_0_0"/>
<dbReference type="InParanoid" id="Q021H8"/>
<dbReference type="OrthoDB" id="9795084at2"/>
<dbReference type="GO" id="GO:0003690">
    <property type="term" value="F:double-stranded DNA binding"/>
    <property type="evidence" value="ECO:0007669"/>
    <property type="project" value="UniProtKB-UniRule"/>
</dbReference>
<dbReference type="GO" id="GO:0006310">
    <property type="term" value="P:DNA recombination"/>
    <property type="evidence" value="ECO:0007669"/>
    <property type="project" value="UniProtKB-KW"/>
</dbReference>
<dbReference type="GO" id="GO:0006303">
    <property type="term" value="P:double-strand break repair via nonhomologous end joining"/>
    <property type="evidence" value="ECO:0007669"/>
    <property type="project" value="UniProtKB-UniRule"/>
</dbReference>
<dbReference type="CDD" id="cd00789">
    <property type="entry name" value="KU_like"/>
    <property type="match status" value="1"/>
</dbReference>
<dbReference type="Gene3D" id="2.40.290.10">
    <property type="match status" value="1"/>
</dbReference>
<dbReference type="HAMAP" id="MF_01875">
    <property type="entry name" value="Prokaryotic_Ku"/>
    <property type="match status" value="1"/>
</dbReference>
<dbReference type="InterPro" id="IPR006164">
    <property type="entry name" value="Ku70/Ku80_beta-barrel_dom"/>
</dbReference>
<dbReference type="InterPro" id="IPR009187">
    <property type="entry name" value="Prok_Ku"/>
</dbReference>
<dbReference type="InterPro" id="IPR016194">
    <property type="entry name" value="SPOC-like_C_dom_sf"/>
</dbReference>
<dbReference type="NCBIfam" id="TIGR02772">
    <property type="entry name" value="Ku_bact"/>
    <property type="match status" value="1"/>
</dbReference>
<dbReference type="PANTHER" id="PTHR41251">
    <property type="entry name" value="NON-HOMOLOGOUS END JOINING PROTEIN KU"/>
    <property type="match status" value="1"/>
</dbReference>
<dbReference type="PANTHER" id="PTHR41251:SF1">
    <property type="entry name" value="NON-HOMOLOGOUS END JOINING PROTEIN KU"/>
    <property type="match status" value="1"/>
</dbReference>
<dbReference type="Pfam" id="PF02735">
    <property type="entry name" value="Ku"/>
    <property type="match status" value="1"/>
</dbReference>
<dbReference type="PIRSF" id="PIRSF006493">
    <property type="entry name" value="Prok_Ku"/>
    <property type="match status" value="1"/>
</dbReference>
<dbReference type="SMART" id="SM00559">
    <property type="entry name" value="Ku78"/>
    <property type="match status" value="1"/>
</dbReference>
<dbReference type="SUPFAM" id="SSF100939">
    <property type="entry name" value="SPOC domain-like"/>
    <property type="match status" value="1"/>
</dbReference>
<proteinExistence type="inferred from homology"/>
<reference key="1">
    <citation type="journal article" date="2009" name="Appl. Environ. Microbiol.">
        <title>Three genomes from the phylum Acidobacteria provide insight into the lifestyles of these microorganisms in soils.</title>
        <authorList>
            <person name="Ward N.L."/>
            <person name="Challacombe J.F."/>
            <person name="Janssen P.H."/>
            <person name="Henrissat B."/>
            <person name="Coutinho P.M."/>
            <person name="Wu M."/>
            <person name="Xie G."/>
            <person name="Haft D.H."/>
            <person name="Sait M."/>
            <person name="Badger J."/>
            <person name="Barabote R.D."/>
            <person name="Bradley B."/>
            <person name="Brettin T.S."/>
            <person name="Brinkac L.M."/>
            <person name="Bruce D."/>
            <person name="Creasy T."/>
            <person name="Daugherty S.C."/>
            <person name="Davidsen T.M."/>
            <person name="DeBoy R.T."/>
            <person name="Detter J.C."/>
            <person name="Dodson R.J."/>
            <person name="Durkin A.S."/>
            <person name="Ganapathy A."/>
            <person name="Gwinn-Giglio M."/>
            <person name="Han C.S."/>
            <person name="Khouri H."/>
            <person name="Kiss H."/>
            <person name="Kothari S.P."/>
            <person name="Madupu R."/>
            <person name="Nelson K.E."/>
            <person name="Nelson W.C."/>
            <person name="Paulsen I."/>
            <person name="Penn K."/>
            <person name="Ren Q."/>
            <person name="Rosovitz M.J."/>
            <person name="Selengut J.D."/>
            <person name="Shrivastava S."/>
            <person name="Sullivan S.A."/>
            <person name="Tapia R."/>
            <person name="Thompson L.S."/>
            <person name="Watkins K.L."/>
            <person name="Yang Q."/>
            <person name="Yu C."/>
            <person name="Zafar N."/>
            <person name="Zhou L."/>
            <person name="Kuske C.R."/>
        </authorList>
    </citation>
    <scope>NUCLEOTIDE SEQUENCE [LARGE SCALE GENOMIC DNA]</scope>
    <source>
        <strain>Ellin6076</strain>
    </source>
</reference>
<feature type="chain" id="PRO_0000389198" description="Non-homologous end joining protein Ku">
    <location>
        <begin position="1"/>
        <end position="267"/>
    </location>
</feature>
<feature type="domain" description="Ku" evidence="1">
    <location>
        <begin position="10"/>
        <end position="190"/>
    </location>
</feature>
<organism>
    <name type="scientific">Solibacter usitatus (strain Ellin6076)</name>
    <dbReference type="NCBI Taxonomy" id="234267"/>
    <lineage>
        <taxon>Bacteria</taxon>
        <taxon>Pseudomonadati</taxon>
        <taxon>Acidobacteriota</taxon>
        <taxon>Terriglobia</taxon>
        <taxon>Bryobacterales</taxon>
        <taxon>Solibacteraceae</taxon>
        <taxon>Candidatus Solibacter</taxon>
    </lineage>
</organism>
<keyword id="KW-0227">DNA damage</keyword>
<keyword id="KW-0233">DNA recombination</keyword>
<keyword id="KW-0234">DNA repair</keyword>
<keyword id="KW-0238">DNA-binding</keyword>